<accession>B7LM78</accession>
<name>ARNB_ESCF3</name>
<proteinExistence type="inferred from homology"/>
<evidence type="ECO:0000255" key="1">
    <source>
        <dbReference type="HAMAP-Rule" id="MF_01167"/>
    </source>
</evidence>
<reference key="1">
    <citation type="journal article" date="2009" name="PLoS Genet.">
        <title>Organised genome dynamics in the Escherichia coli species results in highly diverse adaptive paths.</title>
        <authorList>
            <person name="Touchon M."/>
            <person name="Hoede C."/>
            <person name="Tenaillon O."/>
            <person name="Barbe V."/>
            <person name="Baeriswyl S."/>
            <person name="Bidet P."/>
            <person name="Bingen E."/>
            <person name="Bonacorsi S."/>
            <person name="Bouchier C."/>
            <person name="Bouvet O."/>
            <person name="Calteau A."/>
            <person name="Chiapello H."/>
            <person name="Clermont O."/>
            <person name="Cruveiller S."/>
            <person name="Danchin A."/>
            <person name="Diard M."/>
            <person name="Dossat C."/>
            <person name="Karoui M.E."/>
            <person name="Frapy E."/>
            <person name="Garry L."/>
            <person name="Ghigo J.M."/>
            <person name="Gilles A.M."/>
            <person name="Johnson J."/>
            <person name="Le Bouguenec C."/>
            <person name="Lescat M."/>
            <person name="Mangenot S."/>
            <person name="Martinez-Jehanne V."/>
            <person name="Matic I."/>
            <person name="Nassif X."/>
            <person name="Oztas S."/>
            <person name="Petit M.A."/>
            <person name="Pichon C."/>
            <person name="Rouy Z."/>
            <person name="Ruf C.S."/>
            <person name="Schneider D."/>
            <person name="Tourret J."/>
            <person name="Vacherie B."/>
            <person name="Vallenet D."/>
            <person name="Medigue C."/>
            <person name="Rocha E.P.C."/>
            <person name="Denamur E."/>
        </authorList>
    </citation>
    <scope>NUCLEOTIDE SEQUENCE [LARGE SCALE GENOMIC DNA]</scope>
    <source>
        <strain>ATCC 35469 / DSM 13698 / BCRC 15582 / CCUG 18766 / IAM 14443 / JCM 21226 / LMG 7866 / NBRC 102419 / NCTC 12128 / CDC 0568-73</strain>
    </source>
</reference>
<protein>
    <recommendedName>
        <fullName evidence="1">UDP-4-amino-4-deoxy-L-arabinose--oxoglutarate aminotransferase</fullName>
        <ecNumber evidence="1">2.6.1.87</ecNumber>
    </recommendedName>
    <alternativeName>
        <fullName evidence="1">UDP-(beta-L-threo-pentapyranosyl-4''-ulose diphosphate) aminotransferase</fullName>
        <shortName evidence="1">UDP-Ara4O aminotransferase</shortName>
    </alternativeName>
    <alternativeName>
        <fullName evidence="1">UDP-4-amino-4-deoxy-L-arabinose aminotransferase</fullName>
    </alternativeName>
</protein>
<feature type="chain" id="PRO_1000137958" description="UDP-4-amino-4-deoxy-L-arabinose--oxoglutarate aminotransferase">
    <location>
        <begin position="1"/>
        <end position="379"/>
    </location>
</feature>
<feature type="modified residue" description="N6-(pyridoxal phosphate)lysine" evidence="1">
    <location>
        <position position="182"/>
    </location>
</feature>
<sequence length="379" mass="41624">MSNFLPFSRPAMGAEELAAVKEVLESGWITTGPKNLALEDAFIQLTGNQYAIAVSSATAGMHITLMALEIGPGDEVITPSMTWVSTLNMISLLGATPVMVDVDRDTLMVTPEIVEAAITPRTKAIIPVHYAGAPADTNALYAIAERHGIAVIEDAAHAVGTYYKGQHVGARGTAIFSFHAIKNITCAEGGLVVTDDESLARQLRTLKFHGLGVDAYDRQTWGRAPQAEVLTPGYKYNLTDINAAIALTQLHKLEQLNARRHDIATQYQHALVNLPFQPLALPAWPHIHSWHLFIIRVDEQRCGINRDTLMEALKEKGIGTGLHFRAAHTQKYYRQHFPDLSLPNTEWNSERICSLPLFPDMTNADAERVITALHQLAGQ</sequence>
<organism>
    <name type="scientific">Escherichia fergusonii (strain ATCC 35469 / DSM 13698 / CCUG 18766 / IAM 14443 / JCM 21226 / LMG 7866 / NBRC 102419 / NCTC 12128 / CDC 0568-73)</name>
    <dbReference type="NCBI Taxonomy" id="585054"/>
    <lineage>
        <taxon>Bacteria</taxon>
        <taxon>Pseudomonadati</taxon>
        <taxon>Pseudomonadota</taxon>
        <taxon>Gammaproteobacteria</taxon>
        <taxon>Enterobacterales</taxon>
        <taxon>Enterobacteriaceae</taxon>
        <taxon>Escherichia</taxon>
    </lineage>
</organism>
<dbReference type="EC" id="2.6.1.87" evidence="1"/>
<dbReference type="EMBL" id="CU928158">
    <property type="protein sequence ID" value="CAQ88451.1"/>
    <property type="molecule type" value="Genomic_DNA"/>
</dbReference>
<dbReference type="RefSeq" id="WP_000064515.1">
    <property type="nucleotide sequence ID" value="NC_011740.1"/>
</dbReference>
<dbReference type="SMR" id="B7LM78"/>
<dbReference type="GeneID" id="75058025"/>
<dbReference type="KEGG" id="efe:EFER_0916"/>
<dbReference type="HOGENOM" id="CLU_033332_0_3_6"/>
<dbReference type="OrthoDB" id="9804264at2"/>
<dbReference type="UniPathway" id="UPA00030"/>
<dbReference type="UniPathway" id="UPA00032">
    <property type="reaction ID" value="UER00493"/>
</dbReference>
<dbReference type="Proteomes" id="UP000000745">
    <property type="component" value="Chromosome"/>
</dbReference>
<dbReference type="GO" id="GO:0016020">
    <property type="term" value="C:membrane"/>
    <property type="evidence" value="ECO:0007669"/>
    <property type="project" value="GOC"/>
</dbReference>
<dbReference type="GO" id="GO:0030170">
    <property type="term" value="F:pyridoxal phosphate binding"/>
    <property type="evidence" value="ECO:0007669"/>
    <property type="project" value="TreeGrafter"/>
</dbReference>
<dbReference type="GO" id="GO:0099620">
    <property type="term" value="F:UDP-4-amino-4-deoxy-L-arabinose aminotransferase"/>
    <property type="evidence" value="ECO:0007669"/>
    <property type="project" value="UniProtKB-EC"/>
</dbReference>
<dbReference type="GO" id="GO:0009245">
    <property type="term" value="P:lipid A biosynthetic process"/>
    <property type="evidence" value="ECO:0007669"/>
    <property type="project" value="UniProtKB-KW"/>
</dbReference>
<dbReference type="GO" id="GO:0009103">
    <property type="term" value="P:lipopolysaccharide biosynthetic process"/>
    <property type="evidence" value="ECO:0007669"/>
    <property type="project" value="UniProtKB-UniRule"/>
</dbReference>
<dbReference type="GO" id="GO:0046677">
    <property type="term" value="P:response to antibiotic"/>
    <property type="evidence" value="ECO:0007669"/>
    <property type="project" value="UniProtKB-KW"/>
</dbReference>
<dbReference type="CDD" id="cd00616">
    <property type="entry name" value="AHBA_syn"/>
    <property type="match status" value="1"/>
</dbReference>
<dbReference type="FunFam" id="3.40.640.10:FF:000040">
    <property type="entry name" value="UDP-4-amino-4-deoxy-L-arabinose--oxoglutarate aminotransferase"/>
    <property type="match status" value="1"/>
</dbReference>
<dbReference type="FunFam" id="3.90.1150.10:FF:000030">
    <property type="entry name" value="UDP-4-amino-4-deoxy-L-arabinose--oxoglutarate aminotransferase"/>
    <property type="match status" value="1"/>
</dbReference>
<dbReference type="Gene3D" id="3.90.1150.10">
    <property type="entry name" value="Aspartate Aminotransferase, domain 1"/>
    <property type="match status" value="1"/>
</dbReference>
<dbReference type="Gene3D" id="3.40.640.10">
    <property type="entry name" value="Type I PLP-dependent aspartate aminotransferase-like (Major domain)"/>
    <property type="match status" value="1"/>
</dbReference>
<dbReference type="HAMAP" id="MF_01167">
    <property type="entry name" value="ArnB_transfer"/>
    <property type="match status" value="1"/>
</dbReference>
<dbReference type="InterPro" id="IPR022850">
    <property type="entry name" value="ArnB_NH2Trfase"/>
</dbReference>
<dbReference type="InterPro" id="IPR000653">
    <property type="entry name" value="DegT/StrS_aminotransferase"/>
</dbReference>
<dbReference type="InterPro" id="IPR015424">
    <property type="entry name" value="PyrdxlP-dep_Trfase"/>
</dbReference>
<dbReference type="InterPro" id="IPR015421">
    <property type="entry name" value="PyrdxlP-dep_Trfase_major"/>
</dbReference>
<dbReference type="InterPro" id="IPR015422">
    <property type="entry name" value="PyrdxlP-dep_Trfase_small"/>
</dbReference>
<dbReference type="NCBIfam" id="NF008658">
    <property type="entry name" value="PRK11658.1"/>
    <property type="match status" value="1"/>
</dbReference>
<dbReference type="PANTHER" id="PTHR30244">
    <property type="entry name" value="TRANSAMINASE"/>
    <property type="match status" value="1"/>
</dbReference>
<dbReference type="PANTHER" id="PTHR30244:SF41">
    <property type="entry name" value="UDP-4-AMINO-4-DEOXY-L-ARABINOSE--OXOGLUTARATE AMINOTRANSFERASE"/>
    <property type="match status" value="1"/>
</dbReference>
<dbReference type="Pfam" id="PF01041">
    <property type="entry name" value="DegT_DnrJ_EryC1"/>
    <property type="match status" value="1"/>
</dbReference>
<dbReference type="PIRSF" id="PIRSF000390">
    <property type="entry name" value="PLP_StrS"/>
    <property type="match status" value="1"/>
</dbReference>
<dbReference type="SUPFAM" id="SSF53383">
    <property type="entry name" value="PLP-dependent transferases"/>
    <property type="match status" value="1"/>
</dbReference>
<keyword id="KW-0032">Aminotransferase</keyword>
<keyword id="KW-0046">Antibiotic resistance</keyword>
<keyword id="KW-0441">Lipid A biosynthesis</keyword>
<keyword id="KW-0444">Lipid biosynthesis</keyword>
<keyword id="KW-0443">Lipid metabolism</keyword>
<keyword id="KW-0448">Lipopolysaccharide biosynthesis</keyword>
<keyword id="KW-0663">Pyridoxal phosphate</keyword>
<keyword id="KW-0808">Transferase</keyword>
<gene>
    <name evidence="1" type="primary">arnB</name>
    <name type="ordered locus">EFER_0916</name>
</gene>
<comment type="function">
    <text evidence="1">Catalyzes the conversion of UDP-4-keto-arabinose (UDP-Ara4O) to UDP-4-amino-4-deoxy-L-arabinose (UDP-L-Ara4N). The modified arabinose is attached to lipid A and is required for resistance to polymyxin and cationic antimicrobial peptides.</text>
</comment>
<comment type="catalytic activity">
    <reaction evidence="1">
        <text>UDP-4-amino-4-deoxy-beta-L-arabinose + 2-oxoglutarate = UDP-beta-L-threo-pentopyranos-4-ulose + L-glutamate</text>
        <dbReference type="Rhea" id="RHEA:24710"/>
        <dbReference type="ChEBI" id="CHEBI:16810"/>
        <dbReference type="ChEBI" id="CHEBI:29985"/>
        <dbReference type="ChEBI" id="CHEBI:58708"/>
        <dbReference type="ChEBI" id="CHEBI:58710"/>
        <dbReference type="EC" id="2.6.1.87"/>
    </reaction>
</comment>
<comment type="cofactor">
    <cofactor evidence="1">
        <name>pyridoxal 5'-phosphate</name>
        <dbReference type="ChEBI" id="CHEBI:597326"/>
    </cofactor>
</comment>
<comment type="pathway">
    <text evidence="1">Nucleotide-sugar biosynthesis; UDP-4-deoxy-4-formamido-beta-L-arabinose biosynthesis; UDP-4-deoxy-4-formamido-beta-L-arabinose from UDP-alpha-D-glucuronate: step 2/3.</text>
</comment>
<comment type="pathway">
    <text evidence="1">Bacterial outer membrane biogenesis; lipopolysaccharide biosynthesis.</text>
</comment>
<comment type="subunit">
    <text evidence="1">Homodimer.</text>
</comment>
<comment type="similarity">
    <text evidence="1">Belongs to the DegT/DnrJ/EryC1 family. ArnB subfamily.</text>
</comment>